<sequence length="38" mass="4497">MTQSNPNEQNVELNRTSLYWGLLLIFVLAVLFSNYFFN</sequence>
<geneLocation type="chloroplast"/>
<organism>
    <name type="scientific">Triticum aestivum</name>
    <name type="common">Wheat</name>
    <dbReference type="NCBI Taxonomy" id="4565"/>
    <lineage>
        <taxon>Eukaryota</taxon>
        <taxon>Viridiplantae</taxon>
        <taxon>Streptophyta</taxon>
        <taxon>Embryophyta</taxon>
        <taxon>Tracheophyta</taxon>
        <taxon>Spermatophyta</taxon>
        <taxon>Magnoliopsida</taxon>
        <taxon>Liliopsida</taxon>
        <taxon>Poales</taxon>
        <taxon>Poaceae</taxon>
        <taxon>BOP clade</taxon>
        <taxon>Pooideae</taxon>
        <taxon>Triticodae</taxon>
        <taxon>Triticeae</taxon>
        <taxon>Triticinae</taxon>
        <taxon>Triticum</taxon>
    </lineage>
</organism>
<evidence type="ECO:0000255" key="1">
    <source>
        <dbReference type="HAMAP-Rule" id="MF_01317"/>
    </source>
</evidence>
<evidence type="ECO:0000269" key="2">
    <source>
    </source>
</evidence>
<evidence type="ECO:0000303" key="3">
    <source>
    </source>
</evidence>
<evidence type="ECO:0000303" key="4">
    <source ref="1"/>
</evidence>
<evidence type="ECO:0000305" key="5"/>
<protein>
    <recommendedName>
        <fullName evidence="1 4">Photosystem II reaction center protein L</fullName>
        <shortName evidence="1">PSII-L</shortName>
    </recommendedName>
    <alternativeName>
        <fullName evidence="3">PSII 5 kDa protein</fullName>
    </alternativeName>
</protein>
<feature type="initiator methionine" description="Removed" evidence="2">
    <location>
        <position position="1"/>
    </location>
</feature>
<feature type="chain" id="PRO_0000219782" description="Photosystem II reaction center protein L">
    <location>
        <begin position="2"/>
        <end position="38"/>
    </location>
</feature>
<feature type="transmembrane region" description="Helical" evidence="1">
    <location>
        <begin position="17"/>
        <end position="37"/>
    </location>
</feature>
<feature type="sequence conflict" description="In Ref. 2; BAB47048." evidence="5" ref="2">
    <original>L</original>
    <variation>P</variation>
    <location>
        <position position="28"/>
    </location>
</feature>
<feature type="sequence conflict" description="In Ref. 2; BAB47048." evidence="5" ref="2">
    <original>S</original>
    <variation>A</variation>
    <location>
        <position position="33"/>
    </location>
</feature>
<name>PSBL_WHEAT</name>
<gene>
    <name evidence="1 3 4" type="primary">psbL</name>
</gene>
<keyword id="KW-0150">Chloroplast</keyword>
<keyword id="KW-0903">Direct protein sequencing</keyword>
<keyword id="KW-0472">Membrane</keyword>
<keyword id="KW-0602">Photosynthesis</keyword>
<keyword id="KW-0604">Photosystem II</keyword>
<keyword id="KW-0934">Plastid</keyword>
<keyword id="KW-0674">Reaction center</keyword>
<keyword id="KW-1185">Reference proteome</keyword>
<keyword id="KW-0793">Thylakoid</keyword>
<keyword id="KW-0812">Transmembrane</keyword>
<keyword id="KW-1133">Transmembrane helix</keyword>
<comment type="function">
    <text evidence="1">One of the components of the core complex of photosystem II (PSII). PSII is a light-driven water:plastoquinone oxidoreductase that uses light energy to abstract electrons from H(2)O, generating O(2) and a proton gradient subsequently used for ATP formation. It consists of a core antenna complex that captures photons, and an electron transfer chain that converts photonic excitation into a charge separation. This subunit is found at the monomer-monomer interface and is required for correct PSII assembly and/or dimerization.</text>
</comment>
<comment type="subunit">
    <text evidence="1">PSII is composed of 1 copy each of membrane proteins PsbA, PsbB, PsbC, PsbD, PsbE, PsbF, PsbH, PsbI, PsbJ, PsbK, PsbL, PsbM, PsbT, PsbX, PsbY, PsbZ, Psb30/Ycf12, at least 3 peripheral proteins of the oxygen-evolving complex and a large number of cofactors. It forms dimeric complexes.</text>
</comment>
<comment type="subcellular location">
    <subcellularLocation>
        <location evidence="1">Plastid</location>
        <location evidence="1">Chloroplast thylakoid membrane</location>
        <topology evidence="1">Single-pass membrane protein</topology>
    </subcellularLocation>
</comment>
<comment type="similarity">
    <text evidence="1">Belongs to the PsbL family.</text>
</comment>
<accession>P60140</accession>
<accession>O47030</accession>
<accession>P12166</accession>
<accession>P12167</accession>
<accession>Q34007</accession>
<proteinExistence type="evidence at protein level"/>
<reference key="1">
    <citation type="journal article" date="1989" name="Plant Mol. Biol.">
        <title>A photosystem II polypeptide is encoded by an open reading frame co-transcribed with genes for cytochrome b-559 in wheat chloroplast DNA.</title>
        <authorList>
            <person name="Webber A.N."/>
            <person name="Hird S.M."/>
            <person name="Packman L.C."/>
            <person name="Dyer T.A."/>
            <person name="Gray J.C."/>
        </authorList>
    </citation>
    <scope>NUCLEOTIDE SEQUENCE [GENOMIC DNA]</scope>
    <scope>PROTEIN SEQUENCE OF 6-17</scope>
    <source>
        <strain>cv. Sentry</strain>
        <tissue>Leaf</tissue>
    </source>
</reference>
<reference key="2">
    <citation type="journal article" date="2000" name="Plant Mol. Biol. Rep.">
        <title>Chinese spring wheat (Triticum aestivum L.) chloroplast genome: complete sequence and contig clones.</title>
        <authorList>
            <person name="Ogihara Y."/>
            <person name="Isono K."/>
            <person name="Kojima T."/>
            <person name="Endo A."/>
            <person name="Hanaoka M."/>
            <person name="Shiina T."/>
            <person name="Terachi T."/>
            <person name="Utsugi S."/>
            <person name="Murata M."/>
            <person name="Mori N."/>
            <person name="Takumi S."/>
            <person name="Ikeo K."/>
            <person name="Gojobori T."/>
            <person name="Murai R."/>
            <person name="Murai K."/>
            <person name="Matsuoka Y."/>
            <person name="Ohnishi Y."/>
            <person name="Tajiri H."/>
            <person name="Tsunewaki K."/>
        </authorList>
    </citation>
    <scope>NUCLEOTIDE SEQUENCE [LARGE SCALE GENOMIC DNA]</scope>
    <source>
        <strain>cv. Chinese Spring</strain>
    </source>
</reference>
<reference key="3">
    <citation type="journal article" date="1989" name="FEBS Lett.">
        <title>N-terminal sequencing of photosystem II low-molecular-mass proteins. 5 and 4.1 kDa components of the O2-evolving core complex from higher plants.</title>
        <authorList>
            <person name="Ikeuchi M."/>
            <person name="Takio K."/>
            <person name="Inoue Y."/>
        </authorList>
    </citation>
    <scope>PROTEIN SEQUENCE OF 2-16</scope>
</reference>
<dbReference type="EMBL" id="X15225">
    <property type="protein sequence ID" value="CAA33296.1"/>
    <property type="molecule type" value="Genomic_DNA"/>
</dbReference>
<dbReference type="EMBL" id="AB042240">
    <property type="protein sequence ID" value="BAB47048.1"/>
    <property type="molecule type" value="Genomic_DNA"/>
</dbReference>
<dbReference type="PIR" id="JG0010">
    <property type="entry name" value="F2WTL"/>
</dbReference>
<dbReference type="RefSeq" id="NP_114273.1">
    <property type="nucleotide sequence ID" value="NC_002762.1"/>
</dbReference>
<dbReference type="SMR" id="P60140"/>
<dbReference type="STRING" id="4565.P60140"/>
<dbReference type="PaxDb" id="4565-EPlTAEP00000010039"/>
<dbReference type="EnsemblPlants" id="TraesARI1D03G00531680.1">
    <property type="protein sequence ID" value="TraesARI1D03G00531680.1.CDS1"/>
    <property type="gene ID" value="TraesARI1D03G00531680"/>
</dbReference>
<dbReference type="EnsemblPlants" id="TraesARI5A03G02786990.1">
    <property type="protein sequence ID" value="TraesARI5A03G02786990.1.CDS1"/>
    <property type="gene ID" value="TraesARI5A03G02786990"/>
</dbReference>
<dbReference type="EnsemblPlants" id="TraesARI7B03G04277660.1">
    <property type="protein sequence ID" value="TraesARI7B03G04277660.1.CDS1"/>
    <property type="gene ID" value="TraesARI7B03G04277660"/>
</dbReference>
<dbReference type="EnsemblPlants" id="TraesCAD_scaffold_007081_01G000100.1">
    <property type="protein sequence ID" value="TraesCAD_scaffold_007081_01G000100.1"/>
    <property type="gene ID" value="TraesCAD_scaffold_007081_01G000100"/>
</dbReference>
<dbReference type="EnsemblPlants" id="TraesCLE_scaffold_135983_01G000200.1">
    <property type="protein sequence ID" value="TraesCLE_scaffold_135983_01G000200.1"/>
    <property type="gene ID" value="TraesCLE_scaffold_135983_01G000200"/>
</dbReference>
<dbReference type="EnsemblPlants" id="TraesCLE_scaffold_186625_01G000800.1">
    <property type="protein sequence ID" value="TraesCLE_scaffold_186625_01G000800.1"/>
    <property type="gene ID" value="TraesCLE_scaffold_186625_01G000800"/>
</dbReference>
<dbReference type="EnsemblPlants" id="TraesCLE_scaffold_265797_01G000600.1">
    <property type="protein sequence ID" value="TraesCLE_scaffold_265797_01G000600.1"/>
    <property type="gene ID" value="TraesCLE_scaffold_265797_01G000600"/>
</dbReference>
<dbReference type="EnsemblPlants" id="TraesCS1A03G0401200.1">
    <property type="protein sequence ID" value="TraesCS1A03G0401200.1.CDS1"/>
    <property type="gene ID" value="TraesCS1A03G0401200"/>
</dbReference>
<dbReference type="EnsemblPlants" id="TraesCS1D02G181900.1">
    <property type="protein sequence ID" value="TraesCS1D02G181900.1.cds1"/>
    <property type="gene ID" value="TraesCS1D02G181900"/>
</dbReference>
<dbReference type="EnsemblPlants" id="TraesCS1D02G295200.1">
    <property type="protein sequence ID" value="TraesCS1D02G295200.1.cds1"/>
    <property type="gene ID" value="TraesCS1D02G295200"/>
</dbReference>
<dbReference type="EnsemblPlants" id="TraesCS1D03G0468500.1">
    <property type="protein sequence ID" value="TraesCS1D03G0468500.1.CDS1"/>
    <property type="gene ID" value="TraesCS1D03G0468500"/>
</dbReference>
<dbReference type="EnsemblPlants" id="TraesCS1D03G0706800.1">
    <property type="protein sequence ID" value="TraesCS1D03G0706800.1.CDS1"/>
    <property type="gene ID" value="TraesCS1D03G0706800"/>
</dbReference>
<dbReference type="EnsemblPlants" id="TraesCS3B02G186500.1">
    <property type="protein sequence ID" value="TraesCS3B02G186500.1"/>
    <property type="gene ID" value="TraesCS3B02G186500"/>
</dbReference>
<dbReference type="EnsemblPlants" id="TraesCS3B03G0447000.1">
    <property type="protein sequence ID" value="TraesCS3B03G0447000.1.CDS"/>
    <property type="gene ID" value="TraesCS3B03G0447000"/>
</dbReference>
<dbReference type="EnsemblPlants" id="TraesCS3D02G052700.1">
    <property type="protein sequence ID" value="TraesCS3D02G052700.1.cds1"/>
    <property type="gene ID" value="TraesCS3D02G052700"/>
</dbReference>
<dbReference type="EnsemblPlants" id="TraesCS3D03G0097200.1">
    <property type="protein sequence ID" value="TraesCS3D03G0097200.1.CDS1"/>
    <property type="gene ID" value="TraesCS3D03G0097200"/>
</dbReference>
<dbReference type="EnsemblPlants" id="TraesCS5A02G437100.1">
    <property type="protein sequence ID" value="TraesCS5A02G437100.1.cds1"/>
    <property type="gene ID" value="TraesCS5A02G437100"/>
</dbReference>
<dbReference type="EnsemblPlants" id="TraesCS5A03G1030900.1">
    <property type="protein sequence ID" value="TraesCS5A03G1030900.1.CDS1"/>
    <property type="gene ID" value="TraesCS5A03G1030900"/>
</dbReference>
<dbReference type="EnsemblPlants" id="TraesCS5B02G380100.1">
    <property type="protein sequence ID" value="TraesCS5B02G380100.1.cds1"/>
    <property type="gene ID" value="TraesCS5B02G380100"/>
</dbReference>
<dbReference type="EnsemblPlants" id="TraesCS5B03G0951700.1">
    <property type="protein sequence ID" value="TraesCS5B03G0951700.1.CDS1"/>
    <property type="gene ID" value="TraesCS5B03G0951700"/>
</dbReference>
<dbReference type="EnsemblPlants" id="TraesCS6D03G0762300.1">
    <property type="protein sequence ID" value="TraesCS6D03G0762300.1.CDS1"/>
    <property type="gene ID" value="TraesCS6D03G0762300"/>
</dbReference>
<dbReference type="EnsemblPlants" id="TraesJAG1D03G00483350.1">
    <property type="protein sequence ID" value="TraesJAG1D03G00483350.1.CDS1"/>
    <property type="gene ID" value="TraesJAG1D03G00483350"/>
</dbReference>
<dbReference type="EnsemblPlants" id="TraesJAG1D03G00525370.1">
    <property type="protein sequence ID" value="TraesJAG1D03G00525370.1.CDS1"/>
    <property type="gene ID" value="TraesJAG1D03G00525370"/>
</dbReference>
<dbReference type="EnsemblPlants" id="TraesJAG1D03G00525390.1">
    <property type="protein sequence ID" value="TraesJAG1D03G00525390.1.CDS1"/>
    <property type="gene ID" value="TraesJAG1D03G00525390"/>
</dbReference>
<dbReference type="EnsemblPlants" id="TraesJAG5B03G02954200.1">
    <property type="protein sequence ID" value="TraesJAG5B03G02954200.1.CDS1"/>
    <property type="gene ID" value="TraesJAG5B03G02954200"/>
</dbReference>
<dbReference type="EnsemblPlants" id="TraesJUL3D03G01828540.1">
    <property type="protein sequence ID" value="TraesJUL3D03G01828540.1.CDS1"/>
    <property type="gene ID" value="TraesJUL3D03G01828540"/>
</dbReference>
<dbReference type="EnsemblPlants" id="TraesJUL5A03G02763790.1">
    <property type="protein sequence ID" value="TraesJUL5A03G02763790.1.CDS1"/>
    <property type="gene ID" value="TraesJUL5A03G02763790"/>
</dbReference>
<dbReference type="EnsemblPlants" id="TraesLDM1D03G00528280.1">
    <property type="protein sequence ID" value="TraesLDM1D03G00528280.1.CDS1"/>
    <property type="gene ID" value="TraesLDM1D03G00528280"/>
</dbReference>
<dbReference type="EnsemblPlants" id="TraesMAC1D03G00483350.1">
    <property type="protein sequence ID" value="TraesMAC1D03G00483350.1.CDS1"/>
    <property type="gene ID" value="TraesMAC1D03G00483350"/>
</dbReference>
<dbReference type="EnsemblPlants" id="TraesMAC3D03G01808450.1">
    <property type="protein sequence ID" value="TraesMAC3D03G01808450.1.CDS1"/>
    <property type="gene ID" value="TraesMAC3D03G01808450"/>
</dbReference>
<dbReference type="EnsemblPlants" id="TraesMAC5A03G02743260.1">
    <property type="protein sequence ID" value="TraesMAC5A03G02743260.1.CDS1"/>
    <property type="gene ID" value="TraesMAC5A03G02743260"/>
</dbReference>
<dbReference type="EnsemblPlants" id="TraesNOR1D03G00491530.1">
    <property type="protein sequence ID" value="TraesNOR1D03G00491530.1.CDS1"/>
    <property type="gene ID" value="TraesNOR1D03G00491530"/>
</dbReference>
<dbReference type="EnsemblPlants" id="TraesNOR5A03G02768650.1">
    <property type="protein sequence ID" value="TraesNOR5A03G02768650.1.CDS1"/>
    <property type="gene ID" value="TraesNOR5A03G02768650"/>
</dbReference>
<dbReference type="EnsemblPlants" id="TraesNOR5B03G02985540.1">
    <property type="protein sequence ID" value="TraesNOR5B03G02985540.1.CDS1"/>
    <property type="gene ID" value="TraesNOR5B03G02985540"/>
</dbReference>
<dbReference type="EnsemblPlants" id="TraesPARA_EIv1.0_0272570.1">
    <property type="protein sequence ID" value="TraesPARA_EIv1.0_0272570.1.CDS1"/>
    <property type="gene ID" value="TraesPARA_EIv1.0_0272570"/>
</dbReference>
<dbReference type="EnsemblPlants" id="TraesPARA_EIv1.0_0296450.1">
    <property type="protein sequence ID" value="TraesPARA_EIv1.0_0296450.1.CDS1"/>
    <property type="gene ID" value="TraesPARA_EIv1.0_0296450"/>
</dbReference>
<dbReference type="EnsemblPlants" id="TraesPARA_EIv1.0_0758290.1">
    <property type="protein sequence ID" value="TraesPARA_EIv1.0_0758290.1.CDS1"/>
    <property type="gene ID" value="TraesPARA_EIv1.0_0758290"/>
</dbReference>
<dbReference type="EnsemblPlants" id="TraesPARA_EIv1.0_1529110.1">
    <property type="protein sequence ID" value="TraesPARA_EIv1.0_1529110.1.CDS1"/>
    <property type="gene ID" value="TraesPARA_EIv1.0_1529110"/>
</dbReference>
<dbReference type="EnsemblPlants" id="TraesPARA_EIv1.0_1721770.1">
    <property type="protein sequence ID" value="TraesPARA_EIv1.0_1721770.1.CDS1"/>
    <property type="gene ID" value="TraesPARA_EIv1.0_1721770"/>
</dbReference>
<dbReference type="EnsemblPlants" id="TraesPARA_EIv1.0_2054970.1">
    <property type="protein sequence ID" value="TraesPARA_EIv1.0_2054970.1.CDS1"/>
    <property type="gene ID" value="TraesPARA_EIv1.0_2054970"/>
</dbReference>
<dbReference type="EnsemblPlants" id="TraesPARA_EIv1.0_2055570.1">
    <property type="protein sequence ID" value="TraesPARA_EIv1.0_2055570.1.CDS1"/>
    <property type="gene ID" value="TraesPARA_EIv1.0_2055570"/>
</dbReference>
<dbReference type="EnsemblPlants" id="TraesPARA_EIv1.0_2645190.1">
    <property type="protein sequence ID" value="TraesPARA_EIv1.0_2645190.1.CDS1"/>
    <property type="gene ID" value="TraesPARA_EIv1.0_2645190"/>
</dbReference>
<dbReference type="EnsemblPlants" id="TraesPARA_EIv1.0_2682090.1">
    <property type="protein sequence ID" value="TraesPARA_EIv1.0_2682090.1.CDS1"/>
    <property type="gene ID" value="TraesPARA_EIv1.0_2682090"/>
</dbReference>
<dbReference type="EnsemblPlants" id="TraesRN1A0100990800.1">
    <property type="protein sequence ID" value="TraesRN1A0100990800.1"/>
    <property type="gene ID" value="TraesRN1A0100990800"/>
</dbReference>
<dbReference type="EnsemblPlants" id="TraesRN1A0100990900.1">
    <property type="protein sequence ID" value="TraesRN1A0100990900.1"/>
    <property type="gene ID" value="TraesRN1A0100990900"/>
</dbReference>
<dbReference type="EnsemblPlants" id="TraesRN1D0100750700.1">
    <property type="protein sequence ID" value="TraesRN1D0100750700.1"/>
    <property type="gene ID" value="TraesRN1D0100750700"/>
</dbReference>
<dbReference type="EnsemblPlants" id="TraesRN2D0100666300.1">
    <property type="protein sequence ID" value="TraesRN2D0100666300.1"/>
    <property type="gene ID" value="TraesRN2D0100666300"/>
</dbReference>
<dbReference type="EnsemblPlants" id="TraesRN3B0100437200.1">
    <property type="protein sequence ID" value="TraesRN3B0100437200.1"/>
    <property type="gene ID" value="TraesRN3B0100437200"/>
</dbReference>
<dbReference type="EnsemblPlants" id="TraesRN3D0100106900.1">
    <property type="protein sequence ID" value="TraesRN3D0100106900.1"/>
    <property type="gene ID" value="TraesRN3D0100106900"/>
</dbReference>
<dbReference type="EnsemblPlants" id="TraesRN5A0101044600.1">
    <property type="protein sequence ID" value="TraesRN5A0101044600.1"/>
    <property type="gene ID" value="TraesRN5A0101044600"/>
</dbReference>
<dbReference type="EnsemblPlants" id="TraesRN5A0101242400.1">
    <property type="protein sequence ID" value="TraesRN5A0101242400.1"/>
    <property type="gene ID" value="TraesRN5A0101242400"/>
</dbReference>
<dbReference type="EnsemblPlants" id="TraesRN5B0100923300.1">
    <property type="protein sequence ID" value="TraesRN5B0100923300.1"/>
    <property type="gene ID" value="TraesRN5B0100923300"/>
</dbReference>
<dbReference type="EnsemblPlants" id="TraesRN5D0100018300.1">
    <property type="protein sequence ID" value="TraesRN5D0100018300.1"/>
    <property type="gene ID" value="TraesRN5D0100018300"/>
</dbReference>
<dbReference type="EnsemblPlants" id="TraesRN5D0100537900.1">
    <property type="protein sequence ID" value="TraesRN5D0100537900.1"/>
    <property type="gene ID" value="TraesRN5D0100537900"/>
</dbReference>
<dbReference type="EnsemblPlants" id="TraesRN6D0100806600.1">
    <property type="protein sequence ID" value="TraesRN6D0100806600.1"/>
    <property type="gene ID" value="TraesRN6D0100806600"/>
</dbReference>
<dbReference type="EnsemblPlants" id="TraesROB_scaffold_012631_01G000300.1">
    <property type="protein sequence ID" value="TraesROB_scaffold_012631_01G000300.1"/>
    <property type="gene ID" value="TraesROB_scaffold_012631_01G000300"/>
</dbReference>
<dbReference type="EnsemblPlants" id="TraesROB_scaffold_017625_01G000200.1">
    <property type="protein sequence ID" value="TraesROB_scaffold_017625_01G000200.1"/>
    <property type="gene ID" value="TraesROB_scaffold_017625_01G000200"/>
</dbReference>
<dbReference type="EnsemblPlants" id="TraesSTA1D03G00524580.1">
    <property type="protein sequence ID" value="TraesSTA1D03G00524580.1.CDS1"/>
    <property type="gene ID" value="TraesSTA1D03G00524580"/>
</dbReference>
<dbReference type="EnsemblPlants" id="TraesSTA5B03G02948740.1">
    <property type="protein sequence ID" value="TraesSTA5B03G02948740.1.CDS1"/>
    <property type="gene ID" value="TraesSTA5B03G02948740"/>
</dbReference>
<dbReference type="EnsemblPlants" id="TraesSYM5A03G02774320.1">
    <property type="protein sequence ID" value="TraesSYM5A03G02774320.1.CDS1"/>
    <property type="gene ID" value="TraesSYM5A03G02774320"/>
</dbReference>
<dbReference type="EnsemblPlants" id="TraesSYM7B03G04062600.1">
    <property type="protein sequence ID" value="TraesSYM7B03G04062600.1.CDS1"/>
    <property type="gene ID" value="TraesSYM7B03G04062600"/>
</dbReference>
<dbReference type="EnsemblPlants" id="TraesWEE_scaffold_1394814_01G000200.1">
    <property type="protein sequence ID" value="TraesWEE_scaffold_1394814_01G000200.1"/>
    <property type="gene ID" value="TraesWEE_scaffold_1394814_01G000200"/>
</dbReference>
<dbReference type="EnsemblPlants" id="TraesWEE_scaffold_201715_01G000800.1">
    <property type="protein sequence ID" value="TraesWEE_scaffold_201715_01G000800.1"/>
    <property type="gene ID" value="TraesWEE_scaffold_201715_01G000800"/>
</dbReference>
<dbReference type="EnsemblPlants" id="TraesWEE_scaffold_217414_01G000300.1">
    <property type="protein sequence ID" value="TraesWEE_scaffold_217414_01G000300.1"/>
    <property type="gene ID" value="TraesWEE_scaffold_217414_01G000300"/>
</dbReference>
<dbReference type="EnsemblPlants" id="TraesWEE_scaffold_243465_01G000100.1">
    <property type="protein sequence ID" value="TraesWEE_scaffold_243465_01G000100.1"/>
    <property type="gene ID" value="TraesWEE_scaffold_243465_01G000100"/>
</dbReference>
<dbReference type="EnsemblPlants" id="TraesWEE_scaffold_535940_01G000100.1">
    <property type="protein sequence ID" value="TraesWEE_scaffold_535940_01G000100.1"/>
    <property type="gene ID" value="TraesWEE_scaffold_535940_01G000100"/>
</dbReference>
<dbReference type="GeneID" id="803189"/>
<dbReference type="Gramene" id="TraesARI1D03G00531680.1">
    <property type="protein sequence ID" value="TraesARI1D03G00531680.1.CDS1"/>
    <property type="gene ID" value="TraesARI1D03G00531680"/>
</dbReference>
<dbReference type="Gramene" id="TraesARI5A03G02786990.1">
    <property type="protein sequence ID" value="TraesARI5A03G02786990.1.CDS1"/>
    <property type="gene ID" value="TraesARI5A03G02786990"/>
</dbReference>
<dbReference type="Gramene" id="TraesARI7B03G04277660.1">
    <property type="protein sequence ID" value="TraesARI7B03G04277660.1.CDS1"/>
    <property type="gene ID" value="TraesARI7B03G04277660"/>
</dbReference>
<dbReference type="Gramene" id="TraesCAD_scaffold_007081_01G000100.1">
    <property type="protein sequence ID" value="TraesCAD_scaffold_007081_01G000100.1"/>
    <property type="gene ID" value="TraesCAD_scaffold_007081_01G000100"/>
</dbReference>
<dbReference type="Gramene" id="TraesCLE_scaffold_135983_01G000200.1">
    <property type="protein sequence ID" value="TraesCLE_scaffold_135983_01G000200.1"/>
    <property type="gene ID" value="TraesCLE_scaffold_135983_01G000200"/>
</dbReference>
<dbReference type="Gramene" id="TraesCLE_scaffold_186625_01G000800.1">
    <property type="protein sequence ID" value="TraesCLE_scaffold_186625_01G000800.1"/>
    <property type="gene ID" value="TraesCLE_scaffold_186625_01G000800"/>
</dbReference>
<dbReference type="Gramene" id="TraesCLE_scaffold_265797_01G000600.1">
    <property type="protein sequence ID" value="TraesCLE_scaffold_265797_01G000600.1"/>
    <property type="gene ID" value="TraesCLE_scaffold_265797_01G000600"/>
</dbReference>
<dbReference type="Gramene" id="TraesCS1A03G0401200.1">
    <property type="protein sequence ID" value="TraesCS1A03G0401200.1.CDS1"/>
    <property type="gene ID" value="TraesCS1A03G0401200"/>
</dbReference>
<dbReference type="Gramene" id="TraesCS1D02G181900.1">
    <property type="protein sequence ID" value="TraesCS1D02G181900.1.cds1"/>
    <property type="gene ID" value="TraesCS1D02G181900"/>
</dbReference>
<dbReference type="Gramene" id="TraesCS1D02G295200.1">
    <property type="protein sequence ID" value="TraesCS1D02G295200.1.cds1"/>
    <property type="gene ID" value="TraesCS1D02G295200"/>
</dbReference>
<dbReference type="Gramene" id="TraesCS1D03G0468500.1">
    <property type="protein sequence ID" value="TraesCS1D03G0468500.1.CDS1"/>
    <property type="gene ID" value="TraesCS1D03G0468500"/>
</dbReference>
<dbReference type="Gramene" id="TraesCS1D03G0706800.1">
    <property type="protein sequence ID" value="TraesCS1D03G0706800.1.CDS1"/>
    <property type="gene ID" value="TraesCS1D03G0706800"/>
</dbReference>
<dbReference type="Gramene" id="TraesCS3B02G186500.1">
    <property type="protein sequence ID" value="TraesCS3B02G186500.1"/>
    <property type="gene ID" value="TraesCS3B02G186500"/>
</dbReference>
<dbReference type="Gramene" id="TraesCS3B03G0447000.1">
    <property type="protein sequence ID" value="TraesCS3B03G0447000.1.CDS"/>
    <property type="gene ID" value="TraesCS3B03G0447000"/>
</dbReference>
<dbReference type="Gramene" id="TraesCS3D02G052700.1">
    <property type="protein sequence ID" value="TraesCS3D02G052700.1.cds1"/>
    <property type="gene ID" value="TraesCS3D02G052700"/>
</dbReference>
<dbReference type="Gramene" id="TraesCS3D03G0097200.1">
    <property type="protein sequence ID" value="TraesCS3D03G0097200.1.CDS1"/>
    <property type="gene ID" value="TraesCS3D03G0097200"/>
</dbReference>
<dbReference type="Gramene" id="TraesCS5A02G437100.1">
    <property type="protein sequence ID" value="TraesCS5A02G437100.1.cds1"/>
    <property type="gene ID" value="TraesCS5A02G437100"/>
</dbReference>
<dbReference type="Gramene" id="TraesCS5A03G1030900.1">
    <property type="protein sequence ID" value="TraesCS5A03G1030900.1.CDS1"/>
    <property type="gene ID" value="TraesCS5A03G1030900"/>
</dbReference>
<dbReference type="Gramene" id="TraesCS5B02G380100.1">
    <property type="protein sequence ID" value="TraesCS5B02G380100.1.cds1"/>
    <property type="gene ID" value="TraesCS5B02G380100"/>
</dbReference>
<dbReference type="Gramene" id="TraesCS5B03G0951700.1">
    <property type="protein sequence ID" value="TraesCS5B03G0951700.1.CDS1"/>
    <property type="gene ID" value="TraesCS5B03G0951700"/>
</dbReference>
<dbReference type="Gramene" id="TraesCS6D03G0762300.1">
    <property type="protein sequence ID" value="TraesCS6D03G0762300.1.CDS1"/>
    <property type="gene ID" value="TraesCS6D03G0762300"/>
</dbReference>
<dbReference type="Gramene" id="TraesJAG1D03G00483350.1">
    <property type="protein sequence ID" value="TraesJAG1D03G00483350.1.CDS1"/>
    <property type="gene ID" value="TraesJAG1D03G00483350"/>
</dbReference>
<dbReference type="Gramene" id="TraesJAG1D03G00525370.1">
    <property type="protein sequence ID" value="TraesJAG1D03G00525370.1.CDS1"/>
    <property type="gene ID" value="TraesJAG1D03G00525370"/>
</dbReference>
<dbReference type="Gramene" id="TraesJAG1D03G00525390.1">
    <property type="protein sequence ID" value="TraesJAG1D03G00525390.1.CDS1"/>
    <property type="gene ID" value="TraesJAG1D03G00525390"/>
</dbReference>
<dbReference type="Gramene" id="TraesJAG5B03G02954200.1">
    <property type="protein sequence ID" value="TraesJAG5B03G02954200.1.CDS1"/>
    <property type="gene ID" value="TraesJAG5B03G02954200"/>
</dbReference>
<dbReference type="Gramene" id="TraesJUL3D03G01828540.1">
    <property type="protein sequence ID" value="TraesJUL3D03G01828540.1.CDS1"/>
    <property type="gene ID" value="TraesJUL3D03G01828540"/>
</dbReference>
<dbReference type="Gramene" id="TraesJUL5A03G02763790.1">
    <property type="protein sequence ID" value="TraesJUL5A03G02763790.1.CDS1"/>
    <property type="gene ID" value="TraesJUL5A03G02763790"/>
</dbReference>
<dbReference type="Gramene" id="TraesLDM1D03G00528280.1">
    <property type="protein sequence ID" value="TraesLDM1D03G00528280.1.CDS1"/>
    <property type="gene ID" value="TraesLDM1D03G00528280"/>
</dbReference>
<dbReference type="Gramene" id="TraesMAC1D03G00483350.1">
    <property type="protein sequence ID" value="TraesMAC1D03G00483350.1.CDS1"/>
    <property type="gene ID" value="TraesMAC1D03G00483350"/>
</dbReference>
<dbReference type="Gramene" id="TraesMAC3D03G01808450.1">
    <property type="protein sequence ID" value="TraesMAC3D03G01808450.1.CDS1"/>
    <property type="gene ID" value="TraesMAC3D03G01808450"/>
</dbReference>
<dbReference type="Gramene" id="TraesMAC5A03G02743260.1">
    <property type="protein sequence ID" value="TraesMAC5A03G02743260.1.CDS1"/>
    <property type="gene ID" value="TraesMAC5A03G02743260"/>
</dbReference>
<dbReference type="Gramene" id="TraesNOR1D03G00491530.1">
    <property type="protein sequence ID" value="TraesNOR1D03G00491530.1.CDS1"/>
    <property type="gene ID" value="TraesNOR1D03G00491530"/>
</dbReference>
<dbReference type="Gramene" id="TraesNOR5A03G02768650.1">
    <property type="protein sequence ID" value="TraesNOR5A03G02768650.1.CDS1"/>
    <property type="gene ID" value="TraesNOR5A03G02768650"/>
</dbReference>
<dbReference type="Gramene" id="TraesNOR5B03G02985540.1">
    <property type="protein sequence ID" value="TraesNOR5B03G02985540.1.CDS1"/>
    <property type="gene ID" value="TraesNOR5B03G02985540"/>
</dbReference>
<dbReference type="Gramene" id="TraesPARA_EIv1.0_0272570.1">
    <property type="protein sequence ID" value="TraesPARA_EIv1.0_0272570.1.CDS1"/>
    <property type="gene ID" value="TraesPARA_EIv1.0_0272570"/>
</dbReference>
<dbReference type="Gramene" id="TraesPARA_EIv1.0_0296450.1">
    <property type="protein sequence ID" value="TraesPARA_EIv1.0_0296450.1.CDS1"/>
    <property type="gene ID" value="TraesPARA_EIv1.0_0296450"/>
</dbReference>
<dbReference type="Gramene" id="TraesPARA_EIv1.0_0758290.1">
    <property type="protein sequence ID" value="TraesPARA_EIv1.0_0758290.1.CDS1"/>
    <property type="gene ID" value="TraesPARA_EIv1.0_0758290"/>
</dbReference>
<dbReference type="Gramene" id="TraesPARA_EIv1.0_1529110.1">
    <property type="protein sequence ID" value="TraesPARA_EIv1.0_1529110.1.CDS1"/>
    <property type="gene ID" value="TraesPARA_EIv1.0_1529110"/>
</dbReference>
<dbReference type="Gramene" id="TraesPARA_EIv1.0_1721770.1">
    <property type="protein sequence ID" value="TraesPARA_EIv1.0_1721770.1.CDS1"/>
    <property type="gene ID" value="TraesPARA_EIv1.0_1721770"/>
</dbReference>
<dbReference type="Gramene" id="TraesPARA_EIv1.0_2054970.1">
    <property type="protein sequence ID" value="TraesPARA_EIv1.0_2054970.1.CDS1"/>
    <property type="gene ID" value="TraesPARA_EIv1.0_2054970"/>
</dbReference>
<dbReference type="Gramene" id="TraesPARA_EIv1.0_2055570.1">
    <property type="protein sequence ID" value="TraesPARA_EIv1.0_2055570.1.CDS1"/>
    <property type="gene ID" value="TraesPARA_EIv1.0_2055570"/>
</dbReference>
<dbReference type="Gramene" id="TraesPARA_EIv1.0_2645190.1">
    <property type="protein sequence ID" value="TraesPARA_EIv1.0_2645190.1.CDS1"/>
    <property type="gene ID" value="TraesPARA_EIv1.0_2645190"/>
</dbReference>
<dbReference type="Gramene" id="TraesPARA_EIv1.0_2682090.1">
    <property type="protein sequence ID" value="TraesPARA_EIv1.0_2682090.1.CDS1"/>
    <property type="gene ID" value="TraesPARA_EIv1.0_2682090"/>
</dbReference>
<dbReference type="Gramene" id="TraesRN1A0100990800.1">
    <property type="protein sequence ID" value="TraesRN1A0100990800.1"/>
    <property type="gene ID" value="TraesRN1A0100990800"/>
</dbReference>
<dbReference type="Gramene" id="TraesRN1A0100990900.1">
    <property type="protein sequence ID" value="TraesRN1A0100990900.1"/>
    <property type="gene ID" value="TraesRN1A0100990900"/>
</dbReference>
<dbReference type="Gramene" id="TraesRN1D0100750700.1">
    <property type="protein sequence ID" value="TraesRN1D0100750700.1"/>
    <property type="gene ID" value="TraesRN1D0100750700"/>
</dbReference>
<dbReference type="Gramene" id="TraesRN2D0100666300.1">
    <property type="protein sequence ID" value="TraesRN2D0100666300.1"/>
    <property type="gene ID" value="TraesRN2D0100666300"/>
</dbReference>
<dbReference type="Gramene" id="TraesRN3B0100437200.1">
    <property type="protein sequence ID" value="TraesRN3B0100437200.1"/>
    <property type="gene ID" value="TraesRN3B0100437200"/>
</dbReference>
<dbReference type="Gramene" id="TraesRN3D0100106900.1">
    <property type="protein sequence ID" value="TraesRN3D0100106900.1"/>
    <property type="gene ID" value="TraesRN3D0100106900"/>
</dbReference>
<dbReference type="Gramene" id="TraesRN5A0101044600.1">
    <property type="protein sequence ID" value="TraesRN5A0101044600.1"/>
    <property type="gene ID" value="TraesRN5A0101044600"/>
</dbReference>
<dbReference type="Gramene" id="TraesRN5A0101242400.1">
    <property type="protein sequence ID" value="TraesRN5A0101242400.1"/>
    <property type="gene ID" value="TraesRN5A0101242400"/>
</dbReference>
<dbReference type="Gramene" id="TraesRN5B0100923300.1">
    <property type="protein sequence ID" value="TraesRN5B0100923300.1"/>
    <property type="gene ID" value="TraesRN5B0100923300"/>
</dbReference>
<dbReference type="Gramene" id="TraesRN5D0100018300.1">
    <property type="protein sequence ID" value="TraesRN5D0100018300.1"/>
    <property type="gene ID" value="TraesRN5D0100018300"/>
</dbReference>
<dbReference type="Gramene" id="TraesRN5D0100537900.1">
    <property type="protein sequence ID" value="TraesRN5D0100537900.1"/>
    <property type="gene ID" value="TraesRN5D0100537900"/>
</dbReference>
<dbReference type="Gramene" id="TraesRN6D0100806600.1">
    <property type="protein sequence ID" value="TraesRN6D0100806600.1"/>
    <property type="gene ID" value="TraesRN6D0100806600"/>
</dbReference>
<dbReference type="Gramene" id="TraesROB_scaffold_012631_01G000300.1">
    <property type="protein sequence ID" value="TraesROB_scaffold_012631_01G000300.1"/>
    <property type="gene ID" value="TraesROB_scaffold_012631_01G000300"/>
</dbReference>
<dbReference type="Gramene" id="TraesROB_scaffold_017625_01G000200.1">
    <property type="protein sequence ID" value="TraesROB_scaffold_017625_01G000200.1"/>
    <property type="gene ID" value="TraesROB_scaffold_017625_01G000200"/>
</dbReference>
<dbReference type="Gramene" id="TraesSTA1D03G00524580.1">
    <property type="protein sequence ID" value="TraesSTA1D03G00524580.1.CDS1"/>
    <property type="gene ID" value="TraesSTA1D03G00524580"/>
</dbReference>
<dbReference type="Gramene" id="TraesSTA5B03G02948740.1">
    <property type="protein sequence ID" value="TraesSTA5B03G02948740.1.CDS1"/>
    <property type="gene ID" value="TraesSTA5B03G02948740"/>
</dbReference>
<dbReference type="Gramene" id="TraesSYM5A03G02774320.1">
    <property type="protein sequence ID" value="TraesSYM5A03G02774320.1.CDS1"/>
    <property type="gene ID" value="TraesSYM5A03G02774320"/>
</dbReference>
<dbReference type="Gramene" id="TraesSYM7B03G04062600.1">
    <property type="protein sequence ID" value="TraesSYM7B03G04062600.1.CDS1"/>
    <property type="gene ID" value="TraesSYM7B03G04062600"/>
</dbReference>
<dbReference type="Gramene" id="TraesWEE_scaffold_1394814_01G000200.1">
    <property type="protein sequence ID" value="TraesWEE_scaffold_1394814_01G000200.1"/>
    <property type="gene ID" value="TraesWEE_scaffold_1394814_01G000200"/>
</dbReference>
<dbReference type="Gramene" id="TraesWEE_scaffold_201715_01G000800.1">
    <property type="protein sequence ID" value="TraesWEE_scaffold_201715_01G000800.1"/>
    <property type="gene ID" value="TraesWEE_scaffold_201715_01G000800"/>
</dbReference>
<dbReference type="Gramene" id="TraesWEE_scaffold_217414_01G000300.1">
    <property type="protein sequence ID" value="TraesWEE_scaffold_217414_01G000300.1"/>
    <property type="gene ID" value="TraesWEE_scaffold_217414_01G000300"/>
</dbReference>
<dbReference type="Gramene" id="TraesWEE_scaffold_243465_01G000100.1">
    <property type="protein sequence ID" value="TraesWEE_scaffold_243465_01G000100.1"/>
    <property type="gene ID" value="TraesWEE_scaffold_243465_01G000100"/>
</dbReference>
<dbReference type="Gramene" id="TraesWEE_scaffold_535940_01G000100.1">
    <property type="protein sequence ID" value="TraesWEE_scaffold_535940_01G000100.1"/>
    <property type="gene ID" value="TraesWEE_scaffold_535940_01G000100"/>
</dbReference>
<dbReference type="KEGG" id="taes:803189"/>
<dbReference type="HOGENOM" id="CLU_214425_0_0_1"/>
<dbReference type="OrthoDB" id="589260at2759"/>
<dbReference type="Proteomes" id="UP000019116">
    <property type="component" value="Chloroplast"/>
</dbReference>
<dbReference type="GO" id="GO:0009535">
    <property type="term" value="C:chloroplast thylakoid membrane"/>
    <property type="evidence" value="ECO:0007669"/>
    <property type="project" value="UniProtKB-SubCell"/>
</dbReference>
<dbReference type="GO" id="GO:0009539">
    <property type="term" value="C:photosystem II reaction center"/>
    <property type="evidence" value="ECO:0007669"/>
    <property type="project" value="InterPro"/>
</dbReference>
<dbReference type="GO" id="GO:0015979">
    <property type="term" value="P:photosynthesis"/>
    <property type="evidence" value="ECO:0007669"/>
    <property type="project" value="UniProtKB-UniRule"/>
</dbReference>
<dbReference type="HAMAP" id="MF_01317">
    <property type="entry name" value="PSII_PsbL"/>
    <property type="match status" value="1"/>
</dbReference>
<dbReference type="InterPro" id="IPR003372">
    <property type="entry name" value="PSII_PsbL"/>
</dbReference>
<dbReference type="InterPro" id="IPR037266">
    <property type="entry name" value="PSII_PsbL_sf"/>
</dbReference>
<dbReference type="NCBIfam" id="NF001972">
    <property type="entry name" value="PRK00753.1"/>
    <property type="match status" value="1"/>
</dbReference>
<dbReference type="Pfam" id="PF02419">
    <property type="entry name" value="PsbL"/>
    <property type="match status" value="1"/>
</dbReference>
<dbReference type="SUPFAM" id="SSF161017">
    <property type="entry name" value="Photosystem II reaction center protein L, PsbL"/>
    <property type="match status" value="1"/>
</dbReference>